<accession>P67386</accession>
<accession>Q83Q45</accession>
<accession>Q8FDH1</accession>
<name>UPPP_ECOL6</name>
<sequence>MSDMHSLLIAAILGVVEGLTEFLPVSSTGHMIIVGHLLGFEGDTAKTFEVVIQLGSILAVVVMFWRRLFGLIGIHFGRPLQHEGESKGRLTLIHILLGMIPAVVLGLLFHDTIKSLFNPINVMYALVVGGLLLIAAECLKPKEPRAPGLDDMTYRQAFMIGCFQCLALWPGFSRSGATISGGMLMGVSRYAASEFSFLLAVPMMMGATALDLYKSWGFLTTGDIPMFAVGFITAFVVALIAIKTFLQLIKRISFIPFAIYRFIVAAAVYVVFF</sequence>
<reference key="1">
    <citation type="journal article" date="2002" name="Proc. Natl. Acad. Sci. U.S.A.">
        <title>Extensive mosaic structure revealed by the complete genome sequence of uropathogenic Escherichia coli.</title>
        <authorList>
            <person name="Welch R.A."/>
            <person name="Burland V."/>
            <person name="Plunkett G. III"/>
            <person name="Redford P."/>
            <person name="Roesch P."/>
            <person name="Rasko D."/>
            <person name="Buckles E.L."/>
            <person name="Liou S.-R."/>
            <person name="Boutin A."/>
            <person name="Hackett J."/>
            <person name="Stroud D."/>
            <person name="Mayhew G.F."/>
            <person name="Rose D.J."/>
            <person name="Zhou S."/>
            <person name="Schwartz D.C."/>
            <person name="Perna N.T."/>
            <person name="Mobley H.L.T."/>
            <person name="Donnenberg M.S."/>
            <person name="Blattner F.R."/>
        </authorList>
    </citation>
    <scope>NUCLEOTIDE SEQUENCE [LARGE SCALE GENOMIC DNA]</scope>
    <source>
        <strain>CFT073 / ATCC 700928 / UPEC</strain>
    </source>
</reference>
<proteinExistence type="inferred from homology"/>
<protein>
    <recommendedName>
        <fullName evidence="1">Undecaprenyl-diphosphatase</fullName>
        <ecNumber evidence="1">3.6.1.27</ecNumber>
    </recommendedName>
    <alternativeName>
        <fullName evidence="1">Bacitracin resistance protein</fullName>
    </alternativeName>
    <alternativeName>
        <fullName evidence="1">Undecaprenyl pyrophosphate phosphatase</fullName>
    </alternativeName>
</protein>
<comment type="function">
    <text evidence="1">Catalyzes the dephosphorylation of undecaprenyl diphosphate (UPP). Confers resistance to bacitracin.</text>
</comment>
<comment type="catalytic activity">
    <reaction evidence="1">
        <text>di-trans,octa-cis-undecaprenyl diphosphate + H2O = di-trans,octa-cis-undecaprenyl phosphate + phosphate + H(+)</text>
        <dbReference type="Rhea" id="RHEA:28094"/>
        <dbReference type="ChEBI" id="CHEBI:15377"/>
        <dbReference type="ChEBI" id="CHEBI:15378"/>
        <dbReference type="ChEBI" id="CHEBI:43474"/>
        <dbReference type="ChEBI" id="CHEBI:58405"/>
        <dbReference type="ChEBI" id="CHEBI:60392"/>
        <dbReference type="EC" id="3.6.1.27"/>
    </reaction>
</comment>
<comment type="subcellular location">
    <subcellularLocation>
        <location evidence="1">Cell inner membrane</location>
        <topology evidence="1">Multi-pass membrane protein</topology>
    </subcellularLocation>
</comment>
<comment type="miscellaneous">
    <text>Bacitracin is thought to be involved in the inhibition of peptidoglycan synthesis by sequestering undecaprenyl diphosphate, thereby reducing the pool of lipid carrier available.</text>
</comment>
<comment type="similarity">
    <text evidence="1">Belongs to the UppP family.</text>
</comment>
<comment type="sequence caution" evidence="2">
    <conflict type="erroneous initiation">
        <sequence resource="EMBL-CDS" id="AAN82252"/>
    </conflict>
</comment>
<dbReference type="EC" id="3.6.1.27" evidence="1"/>
<dbReference type="EMBL" id="AE014075">
    <property type="protein sequence ID" value="AAN82252.1"/>
    <property type="status" value="ALT_INIT"/>
    <property type="molecule type" value="Genomic_DNA"/>
</dbReference>
<dbReference type="RefSeq" id="WP_001305111.1">
    <property type="nucleotide sequence ID" value="NZ_CP051263.1"/>
</dbReference>
<dbReference type="SMR" id="P67386"/>
<dbReference type="STRING" id="199310.c3807"/>
<dbReference type="GeneID" id="86861207"/>
<dbReference type="KEGG" id="ecc:c3807"/>
<dbReference type="eggNOG" id="COG1968">
    <property type="taxonomic scope" value="Bacteria"/>
</dbReference>
<dbReference type="HOGENOM" id="CLU_060296_2_0_6"/>
<dbReference type="Proteomes" id="UP000001410">
    <property type="component" value="Chromosome"/>
</dbReference>
<dbReference type="GO" id="GO:0005886">
    <property type="term" value="C:plasma membrane"/>
    <property type="evidence" value="ECO:0007669"/>
    <property type="project" value="UniProtKB-SubCell"/>
</dbReference>
<dbReference type="GO" id="GO:0050380">
    <property type="term" value="F:undecaprenyl-diphosphatase activity"/>
    <property type="evidence" value="ECO:0007669"/>
    <property type="project" value="UniProtKB-UniRule"/>
</dbReference>
<dbReference type="GO" id="GO:0071555">
    <property type="term" value="P:cell wall organization"/>
    <property type="evidence" value="ECO:0007669"/>
    <property type="project" value="UniProtKB-KW"/>
</dbReference>
<dbReference type="GO" id="GO:0009252">
    <property type="term" value="P:peptidoglycan biosynthetic process"/>
    <property type="evidence" value="ECO:0007669"/>
    <property type="project" value="UniProtKB-KW"/>
</dbReference>
<dbReference type="GO" id="GO:0008360">
    <property type="term" value="P:regulation of cell shape"/>
    <property type="evidence" value="ECO:0007669"/>
    <property type="project" value="UniProtKB-KW"/>
</dbReference>
<dbReference type="GO" id="GO:0046677">
    <property type="term" value="P:response to antibiotic"/>
    <property type="evidence" value="ECO:0007669"/>
    <property type="project" value="UniProtKB-UniRule"/>
</dbReference>
<dbReference type="HAMAP" id="MF_01006">
    <property type="entry name" value="Undec_diphosphatase"/>
    <property type="match status" value="1"/>
</dbReference>
<dbReference type="InterPro" id="IPR003824">
    <property type="entry name" value="UppP"/>
</dbReference>
<dbReference type="NCBIfam" id="NF001388">
    <property type="entry name" value="PRK00281.1-1"/>
    <property type="match status" value="1"/>
</dbReference>
<dbReference type="NCBIfam" id="NF001389">
    <property type="entry name" value="PRK00281.1-2"/>
    <property type="match status" value="1"/>
</dbReference>
<dbReference type="NCBIfam" id="NF001390">
    <property type="entry name" value="PRK00281.1-4"/>
    <property type="match status" value="1"/>
</dbReference>
<dbReference type="NCBIfam" id="TIGR00753">
    <property type="entry name" value="undec_PP_bacA"/>
    <property type="match status" value="1"/>
</dbReference>
<dbReference type="PANTHER" id="PTHR30622">
    <property type="entry name" value="UNDECAPRENYL-DIPHOSPHATASE"/>
    <property type="match status" value="1"/>
</dbReference>
<dbReference type="PANTHER" id="PTHR30622:SF3">
    <property type="entry name" value="UNDECAPRENYL-DIPHOSPHATASE"/>
    <property type="match status" value="1"/>
</dbReference>
<dbReference type="Pfam" id="PF02673">
    <property type="entry name" value="BacA"/>
    <property type="match status" value="1"/>
</dbReference>
<evidence type="ECO:0000255" key="1">
    <source>
        <dbReference type="HAMAP-Rule" id="MF_01006"/>
    </source>
</evidence>
<evidence type="ECO:0000305" key="2"/>
<feature type="chain" id="PRO_0000151148" description="Undecaprenyl-diphosphatase">
    <location>
        <begin position="1"/>
        <end position="273"/>
    </location>
</feature>
<feature type="transmembrane region" description="Helical" evidence="1">
    <location>
        <begin position="6"/>
        <end position="26"/>
    </location>
</feature>
<feature type="transmembrane region" description="Helical" evidence="1">
    <location>
        <begin position="45"/>
        <end position="65"/>
    </location>
</feature>
<feature type="transmembrane region" description="Helical" evidence="1">
    <location>
        <begin position="90"/>
        <end position="110"/>
    </location>
</feature>
<feature type="transmembrane region" description="Helical" evidence="1">
    <location>
        <begin position="116"/>
        <end position="136"/>
    </location>
</feature>
<feature type="transmembrane region" description="Helical" evidence="1">
    <location>
        <begin position="190"/>
        <end position="210"/>
    </location>
</feature>
<feature type="transmembrane region" description="Helical" evidence="1">
    <location>
        <begin position="222"/>
        <end position="242"/>
    </location>
</feature>
<feature type="transmembrane region" description="Helical" evidence="1">
    <location>
        <begin position="252"/>
        <end position="272"/>
    </location>
</feature>
<keyword id="KW-0046">Antibiotic resistance</keyword>
<keyword id="KW-0997">Cell inner membrane</keyword>
<keyword id="KW-1003">Cell membrane</keyword>
<keyword id="KW-0133">Cell shape</keyword>
<keyword id="KW-0961">Cell wall biogenesis/degradation</keyword>
<keyword id="KW-0378">Hydrolase</keyword>
<keyword id="KW-0472">Membrane</keyword>
<keyword id="KW-0573">Peptidoglycan synthesis</keyword>
<keyword id="KW-1185">Reference proteome</keyword>
<keyword id="KW-0812">Transmembrane</keyword>
<keyword id="KW-1133">Transmembrane helix</keyword>
<gene>
    <name evidence="1" type="primary">uppP</name>
    <name type="synonym">bacA</name>
    <name type="synonym">upk</name>
    <name type="ordered locus">c3807</name>
</gene>
<organism>
    <name type="scientific">Escherichia coli O6:H1 (strain CFT073 / ATCC 700928 / UPEC)</name>
    <dbReference type="NCBI Taxonomy" id="199310"/>
    <lineage>
        <taxon>Bacteria</taxon>
        <taxon>Pseudomonadati</taxon>
        <taxon>Pseudomonadota</taxon>
        <taxon>Gammaproteobacteria</taxon>
        <taxon>Enterobacterales</taxon>
        <taxon>Enterobacteriaceae</taxon>
        <taxon>Escherichia</taxon>
    </lineage>
</organism>